<accession>P75334</accession>
<comment type="subcellular location">
    <subcellularLocation>
        <location evidence="1">Cell membrane</location>
        <topology evidence="1">Lipid-anchor</topology>
    </subcellularLocation>
</comment>
<comment type="similarity">
    <text evidence="3">Belongs to the MG307/MG309/MG338 family.</text>
</comment>
<proteinExistence type="inferred from homology"/>
<feature type="signal peptide" evidence="1">
    <location>
        <begin position="1"/>
        <end position="27"/>
    </location>
</feature>
<feature type="chain" id="PRO_0000014033" description="Uncharacterized lipoprotein MG309 homolog">
    <location>
        <begin position="28"/>
        <end position="1325"/>
    </location>
</feature>
<feature type="region of interest" description="Disordered" evidence="2">
    <location>
        <begin position="379"/>
        <end position="402"/>
    </location>
</feature>
<feature type="region of interest" description="Disordered" evidence="2">
    <location>
        <begin position="430"/>
        <end position="464"/>
    </location>
</feature>
<feature type="compositionally biased region" description="Gly residues" evidence="2">
    <location>
        <begin position="436"/>
        <end position="448"/>
    </location>
</feature>
<feature type="compositionally biased region" description="Low complexity" evidence="2">
    <location>
        <begin position="449"/>
        <end position="464"/>
    </location>
</feature>
<feature type="lipid moiety-binding region" description="N-palmitoyl cysteine" evidence="1">
    <location>
        <position position="28"/>
    </location>
</feature>
<feature type="lipid moiety-binding region" description="S-diacylglycerol cysteine" evidence="1">
    <location>
        <position position="28"/>
    </location>
</feature>
<evidence type="ECO:0000255" key="1">
    <source>
        <dbReference type="PROSITE-ProRule" id="PRU00303"/>
    </source>
</evidence>
<evidence type="ECO:0000256" key="2">
    <source>
        <dbReference type="SAM" id="MobiDB-lite"/>
    </source>
</evidence>
<evidence type="ECO:0000305" key="3"/>
<keyword id="KW-1003">Cell membrane</keyword>
<keyword id="KW-0449">Lipoprotein</keyword>
<keyword id="KW-0472">Membrane</keyword>
<keyword id="KW-0564">Palmitate</keyword>
<keyword id="KW-1185">Reference proteome</keyword>
<keyword id="KW-0732">Signal</keyword>
<protein>
    <recommendedName>
        <fullName>Uncharacterized lipoprotein MG309 homolog</fullName>
    </recommendedName>
</protein>
<sequence length="1325" mass="146278">MHTFTRKVKWPFMFTAIGLTFGIVAVACAQPTASTVEGLFKPSSAFADRTDFSLSSILQKSLINRESFNQYLAMRLAPVLRTFYEDNYDTDIKERLNGFTADTDNAFVSQEQNLRNQFRENYLVHLQTDIFDNTGGNQAAWKLRDVNNKIIDDFISRIFAKNFVEYVQDGVGPLTKPTKSLIENTSNFKNIKLQPKFVNKNAKLKINNDAVYAAIQDKLLDQFITNENPNLVSRVVFTNETPVDGFDNYFNTKVIQSPTPSYQFQVFNKYNQQSGGTKGANGFNLLASNLKSYKNDQSKGIDIPNKFSSDSGGKLLLKASDMFDTFDPSFSAAFIQGYLALQKKSKGADSKEVDSLIKDKSIIENFFVDNNTQAAAAARAASSSSEGTIQLKTASDGGGTTQSTVHKTDLVKIFGDKDVFAGEYKQQIGNTNANQTGGGGSGGGGGTSTGSSTGSSTETTTGNSSKAVVDLIEVKKDSSSQPDYILSRGKDGIHLMAVDGGSHYLTESGRDVAKQKKFLLFRALQTKYGLVDTDTTYDFKLFDEVKKYFDTNRILFLFEALLDLSSDTNNKDNFLSYPQFKKFADSIKSIEKDLKELVQAHYKQAVFNETAVAENKVTLKLAERNQPFIDNERNNQIEQNGLAAKLPYEQDAKTGHYNDLGNYYKDIIDNVDKKGTSTVKTTSSNTGQTKNFSEEVVSKLKDNKKKVEEAAKKHVEALKVFTIPSPLYSQVILVQTKLSFTPESTSLGLNLALNNYLTSTELQNSIKLSYFQEDEAFKKIIDITNLTFSQQSGGTGGTNGNNNLTADNWKIFKETYLLDLFESQAQKSIFGHVGSSDKNSSTKTGIEGVLDTLYSSLNLEERLDSDDVIDYLSYLYTAHWLLKDNLKNYKQSLQSKLSRTSNAFLVWSVDSEKNKNDSQSTLSSTASSTSNTGLIQLRSVVSLAQNQAAGQGGDNNSDITQTEVKNPNFVFGSSVYDWTNSKTPEVNRAADDTSSFFYTKSSSSSTGAAQSSATVLRSLNQASGMTTKTAKNRYGFRGIVTSSTSGSLPEAVSRRLFKQFVNQTEKGVKVGGQMLITTAKSGKATLVLKQQADDAESTTNNAYKGALFSFGSMDNLKNIINGIQTQTEFDALYNHLTSDLNIDVTGVDKNKTLTEQKTSLTSFVDSNFKQSTQSAQRGDTSARSARSATVQIKKTQEDNQNTNYKDVFSRFDGYIGDNKVEEKNYTSYQFLSDGGKYHATFVKQVNLDDVEKIGTDSLKQEDSSKDKRLNLSLEEFLAAIALEALDPNNQTQAINALISGNKKGLVKVGDFRIFSSISAQWVRRF</sequence>
<dbReference type="EMBL" id="U00089">
    <property type="protein sequence ID" value="AAB96045.1"/>
    <property type="molecule type" value="Genomic_DNA"/>
</dbReference>
<dbReference type="PIR" id="S73723">
    <property type="entry name" value="S73723"/>
</dbReference>
<dbReference type="RefSeq" id="NP_110132.1">
    <property type="nucleotide sequence ID" value="NC_000912.1"/>
</dbReference>
<dbReference type="RefSeq" id="WP_010874800.1">
    <property type="nucleotide sequence ID" value="NC_000912.1"/>
</dbReference>
<dbReference type="STRING" id="272634.MPN_444"/>
<dbReference type="EnsemblBacteria" id="AAB96045">
    <property type="protein sequence ID" value="AAB96045"/>
    <property type="gene ID" value="MPN_444"/>
</dbReference>
<dbReference type="KEGG" id="mpn:MPN_444"/>
<dbReference type="PATRIC" id="fig|272634.6.peg.480"/>
<dbReference type="HOGENOM" id="CLU_007912_0_0_14"/>
<dbReference type="OrthoDB" id="394364at2"/>
<dbReference type="BioCyc" id="MPNE272634:G1GJ3-714-MONOMER"/>
<dbReference type="Proteomes" id="UP000000808">
    <property type="component" value="Chromosome"/>
</dbReference>
<dbReference type="GO" id="GO:0005886">
    <property type="term" value="C:plasma membrane"/>
    <property type="evidence" value="ECO:0007669"/>
    <property type="project" value="UniProtKB-SubCell"/>
</dbReference>
<dbReference type="InterPro" id="IPR022186">
    <property type="entry name" value="DUF3713"/>
</dbReference>
<dbReference type="Pfam" id="PF12506">
    <property type="entry name" value="DUF3713"/>
    <property type="match status" value="1"/>
</dbReference>
<dbReference type="PROSITE" id="PS51257">
    <property type="entry name" value="PROKAR_LIPOPROTEIN"/>
    <property type="match status" value="1"/>
</dbReference>
<gene>
    <name type="ordered locus">MPN_444</name>
    <name type="ORF">H08_orf1325</name>
    <name type="ORF">MP397</name>
</gene>
<reference key="1">
    <citation type="journal article" date="1996" name="Nucleic Acids Res.">
        <title>Complete sequence analysis of the genome of the bacterium Mycoplasma pneumoniae.</title>
        <authorList>
            <person name="Himmelreich R."/>
            <person name="Hilbert H."/>
            <person name="Plagens H."/>
            <person name="Pirkl E."/>
            <person name="Li B.-C."/>
            <person name="Herrmann R."/>
        </authorList>
    </citation>
    <scope>NUCLEOTIDE SEQUENCE [LARGE SCALE GENOMIC DNA]</scope>
    <source>
        <strain>ATCC 29342 / M129 / Subtype 1</strain>
    </source>
</reference>
<name>Y444_MYCPN</name>
<organism>
    <name type="scientific">Mycoplasma pneumoniae (strain ATCC 29342 / M129 / Subtype 1)</name>
    <name type="common">Mycoplasmoides pneumoniae</name>
    <dbReference type="NCBI Taxonomy" id="272634"/>
    <lineage>
        <taxon>Bacteria</taxon>
        <taxon>Bacillati</taxon>
        <taxon>Mycoplasmatota</taxon>
        <taxon>Mycoplasmoidales</taxon>
        <taxon>Mycoplasmoidaceae</taxon>
        <taxon>Mycoplasmoides</taxon>
    </lineage>
</organism>